<dbReference type="EC" id="2.3.1.184"/>
<dbReference type="EMBL" id="X74299">
    <property type="protein sequence ID" value="CAA52352.1"/>
    <property type="molecule type" value="Genomic_DNA"/>
</dbReference>
<dbReference type="EMBL" id="L40174">
    <property type="protein sequence ID" value="AAA62483.1"/>
    <property type="molecule type" value="Genomic_DNA"/>
</dbReference>
<dbReference type="PIR" id="S35947">
    <property type="entry name" value="S35947"/>
</dbReference>
<dbReference type="SMR" id="P33880"/>
<dbReference type="GO" id="GO:0061579">
    <property type="term" value="F:N-acyl homoserine lactone synthase activity"/>
    <property type="evidence" value="ECO:0007669"/>
    <property type="project" value="UniProtKB-EC"/>
</dbReference>
<dbReference type="GO" id="GO:0017000">
    <property type="term" value="P:antibiotic biosynthetic process"/>
    <property type="evidence" value="ECO:0007669"/>
    <property type="project" value="UniProtKB-KW"/>
</dbReference>
<dbReference type="GO" id="GO:0009372">
    <property type="term" value="P:quorum sensing"/>
    <property type="evidence" value="ECO:0007669"/>
    <property type="project" value="UniProtKB-KW"/>
</dbReference>
<dbReference type="GO" id="GO:0007165">
    <property type="term" value="P:signal transduction"/>
    <property type="evidence" value="ECO:0007669"/>
    <property type="project" value="TreeGrafter"/>
</dbReference>
<dbReference type="Gene3D" id="3.40.630.30">
    <property type="match status" value="1"/>
</dbReference>
<dbReference type="InterPro" id="IPR016181">
    <property type="entry name" value="Acyl_CoA_acyltransferase"/>
</dbReference>
<dbReference type="InterPro" id="IPR018311">
    <property type="entry name" value="Autoind_synth_CS"/>
</dbReference>
<dbReference type="InterPro" id="IPR001690">
    <property type="entry name" value="Autoind_synthase"/>
</dbReference>
<dbReference type="PANTHER" id="PTHR39322">
    <property type="entry name" value="ACYL-HOMOSERINE-LACTONE SYNTHASE"/>
    <property type="match status" value="1"/>
</dbReference>
<dbReference type="PANTHER" id="PTHR39322:SF1">
    <property type="entry name" value="ISOVALERYL-HOMOSERINE LACTONE SYNTHASE"/>
    <property type="match status" value="1"/>
</dbReference>
<dbReference type="Pfam" id="PF00765">
    <property type="entry name" value="Autoind_synth"/>
    <property type="match status" value="1"/>
</dbReference>
<dbReference type="PRINTS" id="PR01549">
    <property type="entry name" value="AUTOINDCRSYN"/>
</dbReference>
<dbReference type="SUPFAM" id="SSF55729">
    <property type="entry name" value="Acyl-CoA N-acyltransferases (Nat)"/>
    <property type="match status" value="1"/>
</dbReference>
<dbReference type="PROSITE" id="PS00949">
    <property type="entry name" value="AUTOINDUCER_SYNTH_1"/>
    <property type="match status" value="1"/>
</dbReference>
<dbReference type="PROSITE" id="PS51187">
    <property type="entry name" value="AUTOINDUCER_SYNTH_2"/>
    <property type="match status" value="1"/>
</dbReference>
<accession>P33880</accession>
<reference key="1">
    <citation type="journal article" date="1993" name="Mol. Microbiol.">
        <title>A novel strategy for the isolation of luxI homologues: evidence for the widespread distribution of a LuxR:LuxI superfamily in enteric bacteria.</title>
        <authorList>
            <person name="Swift S."/>
            <person name="Winson M.K."/>
            <person name="Chan P.F."/>
            <person name="Bainton N.J."/>
            <person name="Birdsall M."/>
            <person name="Reeves P.J."/>
            <person name="Rees C.E.D."/>
            <person name="Chhabra S.R."/>
            <person name="Hill P.J."/>
            <person name="Throup J.P."/>
            <person name="Bycroft B.W."/>
            <person name="Salmond G.P.C."/>
            <person name="Williams P."/>
            <person name="Stewart G.S.A.B."/>
        </authorList>
    </citation>
    <scope>NUCLEOTIDE SEQUENCE [GENOMIC DNA]</scope>
    <source>
        <strain>ATCC 39048 / GS101 / SC 12</strain>
    </source>
</reference>
<reference key="2">
    <citation type="submission" date="1995-03" db="EMBL/GenBank/DDBJ databases">
        <authorList>
            <person name="Chatterjee A."/>
            <person name="Cui Y."/>
            <person name="Liu Y."/>
            <person name="Dumenyo C.K."/>
            <person name="Chatterjee A.K."/>
        </authorList>
    </citation>
    <scope>NUCLEOTIDE SEQUENCE [GENOMIC DNA]</scope>
    <source>
        <strain>71</strain>
    </source>
</reference>
<sequence length="216" mass="25067">MLEIFDVNHTLLSETKSGELFTLRKETFKDRLNWAVQCTDGMEFDQYDNNNTTYLFGIKDNTVICSLRFIETKYPNMITGTFFPYFKEINIPEGNYLESSRFFVDKSRAKDILGNEYPISSMLFLSMINYSKDKGYDGIYTIVSHPMLTILKRSGWGIRVVEQGLSEKEERVYLVFLPVDDENQEALARRINRSGTFMSNELKQWPLRVPAAIAQA</sequence>
<keyword id="KW-0045">Antibiotic biosynthesis</keyword>
<keyword id="KW-0071">Autoinducer synthesis</keyword>
<keyword id="KW-0673">Quorum sensing</keyword>
<keyword id="KW-0949">S-adenosyl-L-methionine</keyword>
<keyword id="KW-0808">Transferase</keyword>
<evidence type="ECO:0000255" key="1">
    <source>
        <dbReference type="PROSITE-ProRule" id="PRU00533"/>
    </source>
</evidence>
<evidence type="ECO:0000305" key="2"/>
<protein>
    <recommendedName>
        <fullName>Acyl-homoserine-lactone synthase</fullName>
        <ecNumber>2.3.1.184</ecNumber>
    </recommendedName>
    <alternativeName>
        <fullName>Autoinducer synthesis protein CarI</fullName>
    </alternativeName>
</protein>
<gene>
    <name type="primary">carI</name>
    <name type="synonym">hslI</name>
</gene>
<proteinExistence type="inferred from homology"/>
<comment type="function">
    <text>Required for the synthesis of OHHL (N-(3-oxohexanoyl)-L-homoserine lactone), an autoinducer molecule which binds to CarR and thus acts in the control of the biosynthesis of carbapenem antibiotics.</text>
</comment>
<comment type="catalytic activity">
    <reaction>
        <text>a fatty acyl-[ACP] + S-adenosyl-L-methionine = an N-acyl-L-homoserine lactone + S-methyl-5'-thioadenosine + holo-[ACP] + H(+)</text>
        <dbReference type="Rhea" id="RHEA:10096"/>
        <dbReference type="Rhea" id="RHEA-COMP:9685"/>
        <dbReference type="Rhea" id="RHEA-COMP:14125"/>
        <dbReference type="ChEBI" id="CHEBI:15378"/>
        <dbReference type="ChEBI" id="CHEBI:17509"/>
        <dbReference type="ChEBI" id="CHEBI:55474"/>
        <dbReference type="ChEBI" id="CHEBI:59789"/>
        <dbReference type="ChEBI" id="CHEBI:64479"/>
        <dbReference type="ChEBI" id="CHEBI:138651"/>
        <dbReference type="EC" id="2.3.1.184"/>
    </reaction>
</comment>
<comment type="similarity">
    <text evidence="1">Belongs to the autoinducer synthase family.</text>
</comment>
<name>CARI_PECCC</name>
<organism>
    <name type="scientific">Pectobacterium carotovorum subsp. carotovorum</name>
    <name type="common">Erwinia carotovora subsp. carotovora</name>
    <dbReference type="NCBI Taxonomy" id="555"/>
    <lineage>
        <taxon>Bacteria</taxon>
        <taxon>Pseudomonadati</taxon>
        <taxon>Pseudomonadota</taxon>
        <taxon>Gammaproteobacteria</taxon>
        <taxon>Enterobacterales</taxon>
        <taxon>Pectobacteriaceae</taxon>
        <taxon>Pectobacterium</taxon>
    </lineage>
</organism>
<feature type="chain" id="PRO_0000210881" description="Acyl-homoserine-lactone synthase">
    <location>
        <begin position="1"/>
        <end position="216"/>
    </location>
</feature>
<feature type="sequence conflict" description="In Ref. 2; AAA62483." evidence="2" ref="2">
    <original>G</original>
    <variation>E</variation>
    <location>
        <position position="18"/>
    </location>
</feature>
<feature type="sequence conflict" description="In Ref. 2; AAA62483." evidence="2" ref="2">
    <original>K</original>
    <variation>R</variation>
    <location>
        <position position="132"/>
    </location>
</feature>
<feature type="sequence conflict" description="In Ref. 2; AAA62483." evidence="2" ref="2">
    <original>RV</original>
    <variation>KG</variation>
    <location>
        <begin position="208"/>
        <end position="209"/>
    </location>
</feature>